<keyword id="KW-1185">Reference proteome</keyword>
<keyword id="KW-0687">Ribonucleoprotein</keyword>
<keyword id="KW-0689">Ribosomal protein</keyword>
<comment type="similarity">
    <text evidence="1">Belongs to the bacterial ribosomal protein bL36 family.</text>
</comment>
<accession>B9E9L4</accession>
<protein>
    <recommendedName>
        <fullName evidence="1">Large ribosomal subunit protein bL36</fullName>
    </recommendedName>
    <alternativeName>
        <fullName evidence="2">50S ribosomal protein L36</fullName>
    </alternativeName>
</protein>
<proteinExistence type="inferred from homology"/>
<sequence length="37" mass="4305">MKVRPSVKPICEKCKVIRRKGKVMVICENPKHKQKQG</sequence>
<organism>
    <name type="scientific">Macrococcus caseolyticus (strain JCSC5402)</name>
    <name type="common">Macrococcoides caseolyticum</name>
    <dbReference type="NCBI Taxonomy" id="458233"/>
    <lineage>
        <taxon>Bacteria</taxon>
        <taxon>Bacillati</taxon>
        <taxon>Bacillota</taxon>
        <taxon>Bacilli</taxon>
        <taxon>Bacillales</taxon>
        <taxon>Staphylococcaceae</taxon>
        <taxon>Macrococcoides</taxon>
    </lineage>
</organism>
<dbReference type="EMBL" id="AP009484">
    <property type="protein sequence ID" value="BAH16925.1"/>
    <property type="molecule type" value="Genomic_DNA"/>
</dbReference>
<dbReference type="RefSeq" id="WP_003156543.1">
    <property type="nucleotide sequence ID" value="NZ_CAXHTI010000005.1"/>
</dbReference>
<dbReference type="SMR" id="B9E9L4"/>
<dbReference type="STRING" id="458233.MCCL_0218"/>
<dbReference type="GeneID" id="97412846"/>
<dbReference type="KEGG" id="mcl:MCCL_0218"/>
<dbReference type="eggNOG" id="COG0257">
    <property type="taxonomic scope" value="Bacteria"/>
</dbReference>
<dbReference type="HOGENOM" id="CLU_135723_6_2_9"/>
<dbReference type="OrthoDB" id="9802520at2"/>
<dbReference type="Proteomes" id="UP000001383">
    <property type="component" value="Chromosome"/>
</dbReference>
<dbReference type="GO" id="GO:0005737">
    <property type="term" value="C:cytoplasm"/>
    <property type="evidence" value="ECO:0007669"/>
    <property type="project" value="UniProtKB-ARBA"/>
</dbReference>
<dbReference type="GO" id="GO:1990904">
    <property type="term" value="C:ribonucleoprotein complex"/>
    <property type="evidence" value="ECO:0007669"/>
    <property type="project" value="UniProtKB-KW"/>
</dbReference>
<dbReference type="GO" id="GO:0005840">
    <property type="term" value="C:ribosome"/>
    <property type="evidence" value="ECO:0007669"/>
    <property type="project" value="UniProtKB-KW"/>
</dbReference>
<dbReference type="GO" id="GO:0003735">
    <property type="term" value="F:structural constituent of ribosome"/>
    <property type="evidence" value="ECO:0007669"/>
    <property type="project" value="InterPro"/>
</dbReference>
<dbReference type="GO" id="GO:0006412">
    <property type="term" value="P:translation"/>
    <property type="evidence" value="ECO:0007669"/>
    <property type="project" value="UniProtKB-UniRule"/>
</dbReference>
<dbReference type="HAMAP" id="MF_00251">
    <property type="entry name" value="Ribosomal_bL36"/>
    <property type="match status" value="1"/>
</dbReference>
<dbReference type="InterPro" id="IPR000473">
    <property type="entry name" value="Ribosomal_bL36"/>
</dbReference>
<dbReference type="InterPro" id="IPR035977">
    <property type="entry name" value="Ribosomal_bL36_sp"/>
</dbReference>
<dbReference type="NCBIfam" id="TIGR01022">
    <property type="entry name" value="rpmJ_bact"/>
    <property type="match status" value="1"/>
</dbReference>
<dbReference type="PANTHER" id="PTHR42888">
    <property type="entry name" value="50S RIBOSOMAL PROTEIN L36, CHLOROPLASTIC"/>
    <property type="match status" value="1"/>
</dbReference>
<dbReference type="PANTHER" id="PTHR42888:SF1">
    <property type="entry name" value="LARGE RIBOSOMAL SUBUNIT PROTEIN BL36C"/>
    <property type="match status" value="1"/>
</dbReference>
<dbReference type="Pfam" id="PF00444">
    <property type="entry name" value="Ribosomal_L36"/>
    <property type="match status" value="1"/>
</dbReference>
<dbReference type="SUPFAM" id="SSF57840">
    <property type="entry name" value="Ribosomal protein L36"/>
    <property type="match status" value="1"/>
</dbReference>
<dbReference type="PROSITE" id="PS00828">
    <property type="entry name" value="RIBOSOMAL_L36"/>
    <property type="match status" value="1"/>
</dbReference>
<evidence type="ECO:0000255" key="1">
    <source>
        <dbReference type="HAMAP-Rule" id="MF_00251"/>
    </source>
</evidence>
<evidence type="ECO:0000305" key="2"/>
<feature type="chain" id="PRO_1000196194" description="Large ribosomal subunit protein bL36">
    <location>
        <begin position="1"/>
        <end position="37"/>
    </location>
</feature>
<gene>
    <name evidence="1" type="primary">rpmJ</name>
    <name type="ordered locus">MCCL_0218</name>
</gene>
<name>RL36_MACCJ</name>
<reference key="1">
    <citation type="journal article" date="2009" name="J. Bacteriol.">
        <title>Complete genome sequence of Macrococcus caseolyticus strain JCSCS5402, reflecting the ancestral genome of the human-pathogenic staphylococci.</title>
        <authorList>
            <person name="Baba T."/>
            <person name="Kuwahara-Arai K."/>
            <person name="Uchiyama I."/>
            <person name="Takeuchi F."/>
            <person name="Ito T."/>
            <person name="Hiramatsu K."/>
        </authorList>
    </citation>
    <scope>NUCLEOTIDE SEQUENCE [LARGE SCALE GENOMIC DNA]</scope>
    <source>
        <strain>JCSC5402</strain>
    </source>
</reference>